<name>SAT_SCHPO</name>
<accession>Q9US33</accession>
<gene>
    <name type="ORF">SPAC1039.08</name>
</gene>
<proteinExistence type="inferred from homology"/>
<sequence length="270" mass="29260">MTVQTAERTITLVQAIWPKLRKEAEKQCEVNPWLAKDLARKILSKKTLRESLSCVLALPLDHVTGSSESMENWFYSILGLNDEKIIRSAMIDLDRLYTTNPACPDLISAFLSFRGFHALQLYRIAHGLWSEGDKTSAVLVQNWTAVAYGVDIHPAASIGDGLFLDHALGIVIGETAIVEDGVSIWHNVTLGSTFKDSGARHPVIRKNAMLCTGATVLGRVEVGENAVVAAGALVTKDVAPNRLALGSPARDVGPVPQYFGALTNPNCTNK</sequence>
<keyword id="KW-0012">Acyltransferase</keyword>
<keyword id="KW-0028">Amino-acid biosynthesis</keyword>
<keyword id="KW-0963">Cytoplasm</keyword>
<keyword id="KW-0539">Nucleus</keyword>
<keyword id="KW-1185">Reference proteome</keyword>
<keyword id="KW-0808">Transferase</keyword>
<dbReference type="EC" id="2.3.1.30"/>
<dbReference type="EMBL" id="CU329670">
    <property type="protein sequence ID" value="CAB63544.1"/>
    <property type="molecule type" value="Genomic_DNA"/>
</dbReference>
<dbReference type="PIR" id="T50058">
    <property type="entry name" value="T50058"/>
</dbReference>
<dbReference type="RefSeq" id="NP_594999.1">
    <property type="nucleotide sequence ID" value="NM_001020430.2"/>
</dbReference>
<dbReference type="SMR" id="Q9US33"/>
<dbReference type="BioGRID" id="279373">
    <property type="interactions" value="3"/>
</dbReference>
<dbReference type="FunCoup" id="Q9US33">
    <property type="interactions" value="519"/>
</dbReference>
<dbReference type="STRING" id="284812.Q9US33"/>
<dbReference type="PaxDb" id="4896-SPAC1039.08.1"/>
<dbReference type="EnsemblFungi" id="SPAC1039.08.1">
    <property type="protein sequence ID" value="SPAC1039.08.1:pep"/>
    <property type="gene ID" value="SPAC1039.08"/>
</dbReference>
<dbReference type="KEGG" id="spo:2542932"/>
<dbReference type="PomBase" id="SPAC1039.08"/>
<dbReference type="VEuPathDB" id="FungiDB:SPAC1039.08"/>
<dbReference type="eggNOG" id="KOG4750">
    <property type="taxonomic scope" value="Eukaryota"/>
</dbReference>
<dbReference type="HOGENOM" id="CLU_051638_0_1_1"/>
<dbReference type="InParanoid" id="Q9US33"/>
<dbReference type="OMA" id="DVIMHDR"/>
<dbReference type="PhylomeDB" id="Q9US33"/>
<dbReference type="UniPathway" id="UPA00136">
    <property type="reaction ID" value="UER00199"/>
</dbReference>
<dbReference type="PRO" id="PR:Q9US33"/>
<dbReference type="Proteomes" id="UP000002485">
    <property type="component" value="Chromosome I"/>
</dbReference>
<dbReference type="GO" id="GO:0005829">
    <property type="term" value="C:cytosol"/>
    <property type="evidence" value="ECO:0007005"/>
    <property type="project" value="PomBase"/>
</dbReference>
<dbReference type="GO" id="GO:0005634">
    <property type="term" value="C:nucleus"/>
    <property type="evidence" value="ECO:0007005"/>
    <property type="project" value="PomBase"/>
</dbReference>
<dbReference type="GO" id="GO:0009001">
    <property type="term" value="F:serine O-acetyltransferase activity"/>
    <property type="evidence" value="ECO:0000318"/>
    <property type="project" value="GO_Central"/>
</dbReference>
<dbReference type="GO" id="GO:0006535">
    <property type="term" value="P:cysteine biosynthetic process from serine"/>
    <property type="evidence" value="ECO:0007669"/>
    <property type="project" value="InterPro"/>
</dbReference>
<dbReference type="CDD" id="cd03354">
    <property type="entry name" value="LbH_SAT"/>
    <property type="match status" value="1"/>
</dbReference>
<dbReference type="FunFam" id="2.160.10.10:FF:000007">
    <property type="entry name" value="Serine acetyltransferase"/>
    <property type="match status" value="1"/>
</dbReference>
<dbReference type="Gene3D" id="2.160.10.10">
    <property type="entry name" value="Hexapeptide repeat proteins"/>
    <property type="match status" value="1"/>
</dbReference>
<dbReference type="Gene3D" id="1.10.3130.10">
    <property type="entry name" value="serine acetyltransferase, domain 1"/>
    <property type="match status" value="1"/>
</dbReference>
<dbReference type="InterPro" id="IPR001451">
    <property type="entry name" value="Hexapep"/>
</dbReference>
<dbReference type="InterPro" id="IPR045304">
    <property type="entry name" value="LbH_SAT"/>
</dbReference>
<dbReference type="InterPro" id="IPR010493">
    <property type="entry name" value="Ser_AcTrfase_N"/>
</dbReference>
<dbReference type="InterPro" id="IPR042122">
    <property type="entry name" value="Ser_AcTrfase_N_sf"/>
</dbReference>
<dbReference type="InterPro" id="IPR053376">
    <property type="entry name" value="Serine_acetyltransferase"/>
</dbReference>
<dbReference type="InterPro" id="IPR011004">
    <property type="entry name" value="Trimer_LpxA-like_sf"/>
</dbReference>
<dbReference type="NCBIfam" id="NF041874">
    <property type="entry name" value="EPS_EpsC"/>
    <property type="match status" value="1"/>
</dbReference>
<dbReference type="PANTHER" id="PTHR42811">
    <property type="entry name" value="SERINE ACETYLTRANSFERASE"/>
    <property type="match status" value="1"/>
</dbReference>
<dbReference type="Pfam" id="PF00132">
    <property type="entry name" value="Hexapep"/>
    <property type="match status" value="1"/>
</dbReference>
<dbReference type="Pfam" id="PF06426">
    <property type="entry name" value="SATase_N"/>
    <property type="match status" value="1"/>
</dbReference>
<dbReference type="SMART" id="SM00971">
    <property type="entry name" value="SATase_N"/>
    <property type="match status" value="1"/>
</dbReference>
<dbReference type="SUPFAM" id="SSF51161">
    <property type="entry name" value="Trimeric LpxA-like enzymes"/>
    <property type="match status" value="1"/>
</dbReference>
<organism>
    <name type="scientific">Schizosaccharomyces pombe (strain 972 / ATCC 24843)</name>
    <name type="common">Fission yeast</name>
    <dbReference type="NCBI Taxonomy" id="284812"/>
    <lineage>
        <taxon>Eukaryota</taxon>
        <taxon>Fungi</taxon>
        <taxon>Dikarya</taxon>
        <taxon>Ascomycota</taxon>
        <taxon>Taphrinomycotina</taxon>
        <taxon>Schizosaccharomycetes</taxon>
        <taxon>Schizosaccharomycetales</taxon>
        <taxon>Schizosaccharomycetaceae</taxon>
        <taxon>Schizosaccharomyces</taxon>
    </lineage>
</organism>
<feature type="chain" id="PRO_0000339409" description="Putative serine acetyltransferase">
    <location>
        <begin position="1"/>
        <end position="270"/>
    </location>
</feature>
<evidence type="ECO:0000269" key="1">
    <source>
    </source>
</evidence>
<evidence type="ECO:0000305" key="2"/>
<comment type="catalytic activity">
    <reaction>
        <text>L-serine + acetyl-CoA = O-acetyl-L-serine + CoA</text>
        <dbReference type="Rhea" id="RHEA:24560"/>
        <dbReference type="ChEBI" id="CHEBI:33384"/>
        <dbReference type="ChEBI" id="CHEBI:57287"/>
        <dbReference type="ChEBI" id="CHEBI:57288"/>
        <dbReference type="ChEBI" id="CHEBI:58340"/>
        <dbReference type="EC" id="2.3.1.30"/>
    </reaction>
</comment>
<comment type="pathway">
    <text>Amino-acid biosynthesis; L-cysteine biosynthesis; L-cysteine from L-serine: step 1/2.</text>
</comment>
<comment type="subcellular location">
    <subcellularLocation>
        <location evidence="1">Cytoplasm</location>
    </subcellularLocation>
    <subcellularLocation>
        <location evidence="1">Nucleus</location>
    </subcellularLocation>
</comment>
<comment type="similarity">
    <text evidence="2">Belongs to the transferase hexapeptide repeat family.</text>
</comment>
<reference key="1">
    <citation type="journal article" date="2002" name="Nature">
        <title>The genome sequence of Schizosaccharomyces pombe.</title>
        <authorList>
            <person name="Wood V."/>
            <person name="Gwilliam R."/>
            <person name="Rajandream M.A."/>
            <person name="Lyne M.H."/>
            <person name="Lyne R."/>
            <person name="Stewart A."/>
            <person name="Sgouros J.G."/>
            <person name="Peat N."/>
            <person name="Hayles J."/>
            <person name="Baker S.G."/>
            <person name="Basham D."/>
            <person name="Bowman S."/>
            <person name="Brooks K."/>
            <person name="Brown D."/>
            <person name="Brown S."/>
            <person name="Chillingworth T."/>
            <person name="Churcher C.M."/>
            <person name="Collins M."/>
            <person name="Connor R."/>
            <person name="Cronin A."/>
            <person name="Davis P."/>
            <person name="Feltwell T."/>
            <person name="Fraser A."/>
            <person name="Gentles S."/>
            <person name="Goble A."/>
            <person name="Hamlin N."/>
            <person name="Harris D.E."/>
            <person name="Hidalgo J."/>
            <person name="Hodgson G."/>
            <person name="Holroyd S."/>
            <person name="Hornsby T."/>
            <person name="Howarth S."/>
            <person name="Huckle E.J."/>
            <person name="Hunt S."/>
            <person name="Jagels K."/>
            <person name="James K.D."/>
            <person name="Jones L."/>
            <person name="Jones M."/>
            <person name="Leather S."/>
            <person name="McDonald S."/>
            <person name="McLean J."/>
            <person name="Mooney P."/>
            <person name="Moule S."/>
            <person name="Mungall K.L."/>
            <person name="Murphy L.D."/>
            <person name="Niblett D."/>
            <person name="Odell C."/>
            <person name="Oliver K."/>
            <person name="O'Neil S."/>
            <person name="Pearson D."/>
            <person name="Quail M.A."/>
            <person name="Rabbinowitsch E."/>
            <person name="Rutherford K.M."/>
            <person name="Rutter S."/>
            <person name="Saunders D."/>
            <person name="Seeger K."/>
            <person name="Sharp S."/>
            <person name="Skelton J."/>
            <person name="Simmonds M.N."/>
            <person name="Squares R."/>
            <person name="Squares S."/>
            <person name="Stevens K."/>
            <person name="Taylor K."/>
            <person name="Taylor R.G."/>
            <person name="Tivey A."/>
            <person name="Walsh S.V."/>
            <person name="Warren T."/>
            <person name="Whitehead S."/>
            <person name="Woodward J.R."/>
            <person name="Volckaert G."/>
            <person name="Aert R."/>
            <person name="Robben J."/>
            <person name="Grymonprez B."/>
            <person name="Weltjens I."/>
            <person name="Vanstreels E."/>
            <person name="Rieger M."/>
            <person name="Schaefer M."/>
            <person name="Mueller-Auer S."/>
            <person name="Gabel C."/>
            <person name="Fuchs M."/>
            <person name="Duesterhoeft A."/>
            <person name="Fritzc C."/>
            <person name="Holzer E."/>
            <person name="Moestl D."/>
            <person name="Hilbert H."/>
            <person name="Borzym K."/>
            <person name="Langer I."/>
            <person name="Beck A."/>
            <person name="Lehrach H."/>
            <person name="Reinhardt R."/>
            <person name="Pohl T.M."/>
            <person name="Eger P."/>
            <person name="Zimmermann W."/>
            <person name="Wedler H."/>
            <person name="Wambutt R."/>
            <person name="Purnelle B."/>
            <person name="Goffeau A."/>
            <person name="Cadieu E."/>
            <person name="Dreano S."/>
            <person name="Gloux S."/>
            <person name="Lelaure V."/>
            <person name="Mottier S."/>
            <person name="Galibert F."/>
            <person name="Aves S.J."/>
            <person name="Xiang Z."/>
            <person name="Hunt C."/>
            <person name="Moore K."/>
            <person name="Hurst S.M."/>
            <person name="Lucas M."/>
            <person name="Rochet M."/>
            <person name="Gaillardin C."/>
            <person name="Tallada V.A."/>
            <person name="Garzon A."/>
            <person name="Thode G."/>
            <person name="Daga R.R."/>
            <person name="Cruzado L."/>
            <person name="Jimenez J."/>
            <person name="Sanchez M."/>
            <person name="del Rey F."/>
            <person name="Benito J."/>
            <person name="Dominguez A."/>
            <person name="Revuelta J.L."/>
            <person name="Moreno S."/>
            <person name="Armstrong J."/>
            <person name="Forsburg S.L."/>
            <person name="Cerutti L."/>
            <person name="Lowe T."/>
            <person name="McCombie W.R."/>
            <person name="Paulsen I."/>
            <person name="Potashkin J."/>
            <person name="Shpakovski G.V."/>
            <person name="Ussery D."/>
            <person name="Barrell B.G."/>
            <person name="Nurse P."/>
        </authorList>
    </citation>
    <scope>NUCLEOTIDE SEQUENCE [LARGE SCALE GENOMIC DNA]</scope>
    <source>
        <strain>972 / ATCC 24843</strain>
    </source>
</reference>
<reference key="2">
    <citation type="journal article" date="2006" name="Nat. Biotechnol.">
        <title>ORFeome cloning and global analysis of protein localization in the fission yeast Schizosaccharomyces pombe.</title>
        <authorList>
            <person name="Matsuyama A."/>
            <person name="Arai R."/>
            <person name="Yashiroda Y."/>
            <person name="Shirai A."/>
            <person name="Kamata A."/>
            <person name="Sekido S."/>
            <person name="Kobayashi Y."/>
            <person name="Hashimoto A."/>
            <person name="Hamamoto M."/>
            <person name="Hiraoka Y."/>
            <person name="Horinouchi S."/>
            <person name="Yoshida M."/>
        </authorList>
    </citation>
    <scope>SUBCELLULAR LOCATION [LARGE SCALE ANALYSIS]</scope>
</reference>
<protein>
    <recommendedName>
        <fullName>Putative serine acetyltransferase</fullName>
        <ecNumber>2.3.1.30</ecNumber>
    </recommendedName>
</protein>